<sequence length="177" mass="19538">MARVSGAAAAEAALMRALYDEHAAVLWRYALRLTGDAAQAEDVVQETLLRAWQHPEVIGDTARPARAWLFTVARNMIIDERRSARFRNVVGSTDQSGTPEQSTPDEVNAALDRLLIADALAQLSAEHRAVIQRSYYRGWSTAQIATDLGIAEGTVKSRLHYAVRALRLTLQELGVTR</sequence>
<gene>
    <name type="primary">sigL</name>
    <name type="ordered locus">Rv0735</name>
</gene>
<keyword id="KW-0002">3D-structure</keyword>
<keyword id="KW-0238">DNA-binding</keyword>
<keyword id="KW-1185">Reference proteome</keyword>
<keyword id="KW-0731">Sigma factor</keyword>
<keyword id="KW-0804">Transcription</keyword>
<keyword id="KW-0805">Transcription regulation</keyword>
<keyword id="KW-0843">Virulence</keyword>
<feature type="chain" id="PRO_0000423646" description="ECF RNA polymerase sigma factor SigL">
    <location>
        <begin position="1"/>
        <end position="177"/>
    </location>
</feature>
<feature type="DNA-binding region" description="H-T-H motif" evidence="2">
    <location>
        <begin position="141"/>
        <end position="160"/>
    </location>
</feature>
<feature type="region of interest" description="Sigma-70 factor domain-2">
    <location>
        <begin position="18"/>
        <end position="85"/>
    </location>
</feature>
<feature type="region of interest" description="Sigma-70 factor domain-4">
    <location>
        <begin position="119"/>
        <end position="167"/>
    </location>
</feature>
<feature type="short sequence motif" description="Interaction with polymerase core subunit RpoC" evidence="1">
    <location>
        <begin position="42"/>
        <end position="45"/>
    </location>
</feature>
<feature type="helix" evidence="9">
    <location>
        <begin position="5"/>
        <end position="34"/>
    </location>
</feature>
<feature type="helix" evidence="9">
    <location>
        <begin position="37"/>
        <end position="52"/>
    </location>
</feature>
<feature type="helix" evidence="9">
    <location>
        <begin position="55"/>
        <end position="59"/>
    </location>
</feature>
<feature type="strand" evidence="9">
    <location>
        <begin position="61"/>
        <end position="63"/>
    </location>
</feature>
<feature type="helix" evidence="9">
    <location>
        <begin position="65"/>
        <end position="80"/>
    </location>
</feature>
<feature type="helix" evidence="9">
    <location>
        <begin position="83"/>
        <end position="88"/>
    </location>
</feature>
<feature type="strand" evidence="9">
    <location>
        <begin position="91"/>
        <end position="95"/>
    </location>
</feature>
<feature type="helix" evidence="8">
    <location>
        <begin position="103"/>
        <end position="121"/>
    </location>
</feature>
<feature type="helix" evidence="8">
    <location>
        <begin position="125"/>
        <end position="135"/>
    </location>
</feature>
<feature type="helix" evidence="8">
    <location>
        <begin position="141"/>
        <end position="148"/>
    </location>
</feature>
<feature type="helix" evidence="8">
    <location>
        <begin position="152"/>
        <end position="173"/>
    </location>
</feature>
<reference key="1">
    <citation type="journal article" date="1998" name="Nature">
        <title>Deciphering the biology of Mycobacterium tuberculosis from the complete genome sequence.</title>
        <authorList>
            <person name="Cole S.T."/>
            <person name="Brosch R."/>
            <person name="Parkhill J."/>
            <person name="Garnier T."/>
            <person name="Churcher C.M."/>
            <person name="Harris D.E."/>
            <person name="Gordon S.V."/>
            <person name="Eiglmeier K."/>
            <person name="Gas S."/>
            <person name="Barry C.E. III"/>
            <person name="Tekaia F."/>
            <person name="Badcock K."/>
            <person name="Basham D."/>
            <person name="Brown D."/>
            <person name="Chillingworth T."/>
            <person name="Connor R."/>
            <person name="Davies R.M."/>
            <person name="Devlin K."/>
            <person name="Feltwell T."/>
            <person name="Gentles S."/>
            <person name="Hamlin N."/>
            <person name="Holroyd S."/>
            <person name="Hornsby T."/>
            <person name="Jagels K."/>
            <person name="Krogh A."/>
            <person name="McLean J."/>
            <person name="Moule S."/>
            <person name="Murphy L.D."/>
            <person name="Oliver S."/>
            <person name="Osborne J."/>
            <person name="Quail M.A."/>
            <person name="Rajandream M.A."/>
            <person name="Rogers J."/>
            <person name="Rutter S."/>
            <person name="Seeger K."/>
            <person name="Skelton S."/>
            <person name="Squares S."/>
            <person name="Squares R."/>
            <person name="Sulston J.E."/>
            <person name="Taylor K."/>
            <person name="Whitehead S."/>
            <person name="Barrell B.G."/>
        </authorList>
    </citation>
    <scope>NUCLEOTIDE SEQUENCE [LARGE SCALE GENOMIC DNA]</scope>
    <source>
        <strain>ATCC 25618 / H37Rv</strain>
    </source>
</reference>
<reference key="2">
    <citation type="journal article" date="2005" name="J. Bacteriol.">
        <title>The Mycobacterium tuberculosis extracytoplasmic-function sigma factor SigL regulates polyketide synthases and secreted or membrane proteins and is required for virulence.</title>
        <authorList>
            <person name="Hahn M.Y."/>
            <person name="Raman S."/>
            <person name="Anaya M."/>
            <person name="Husson R.N."/>
        </authorList>
    </citation>
    <scope>FUNCTION</scope>
    <scope>INTERACTION WITH RSLA</scope>
    <scope>INDUCTION</scope>
    <scope>DISRUPTION PHENOTYPE</scope>
    <source>
        <strain>ATCC 25618 / H37Rv</strain>
    </source>
</reference>
<reference key="3">
    <citation type="journal article" date="2006" name="Infect. Immun.">
        <title>Posttranslational regulation of Mycobacterium tuberculosis extracytoplasmic-function sigma factor sigma L and roles in virulence and in global regulation of gene expression.</title>
        <authorList>
            <person name="Dainese E."/>
            <person name="Rodrigue S."/>
            <person name="Delogu G."/>
            <person name="Provvedi R."/>
            <person name="Laflamme L."/>
            <person name="Brzezinski R."/>
            <person name="Fadda G."/>
            <person name="Smith I."/>
            <person name="Gaudreau L."/>
            <person name="Palu G."/>
            <person name="Manganelli R."/>
        </authorList>
    </citation>
    <scope>FUNCTION</scope>
    <scope>INTERACTION WITH RSLA</scope>
    <scope>INDUCTION</scope>
    <scope>DISRUPTION PHENOTYPE</scope>
    <source>
        <strain>ATCC 25618 / H37Rv</strain>
    </source>
</reference>
<reference key="4">
    <citation type="journal article" date="2010" name="Protein Expr. Purif.">
        <title>Over-expression and purification strategies for recombinant multi-protein oligomers: a case study of Mycobacterium tuberculosis sigma/anti-sigma factor protein complexes.</title>
        <authorList>
            <person name="Thakur K.G."/>
            <person name="Jaiswal R.K."/>
            <person name="Shukla J.K."/>
            <person name="Praveena T."/>
            <person name="Gopal B."/>
        </authorList>
    </citation>
    <scope>INTERACTION WITH RSLA</scope>
</reference>
<reference key="5">
    <citation type="journal article" date="2010" name="J. Mol. Biol.">
        <title>Structural and biochemical bases for the redox sensitivity of Mycobacterium tuberculosis RslA.</title>
        <authorList>
            <person name="Thakur K.G."/>
            <person name="Praveena T."/>
            <person name="Gopal B."/>
        </authorList>
    </citation>
    <scope>X-RAY CRYSTALLOGRAPHY (2.35 ANGSTROMS) OF 99-177 IN COMPLEX WITH RSLA</scope>
    <scope>SUBUNIT</scope>
    <source>
        <strain>ATCC 25618 / H37Rv</strain>
    </source>
</reference>
<proteinExistence type="evidence at protein level"/>
<name>SIGL_MYCTU</name>
<comment type="function">
    <text evidence="3 4">Sigma factors are initiation factors that promote the attachment of RNA polymerase to specific initiation sites and are then released. Extracytoplasmic function (ECF) sigma factors are held in an inactive form by an anti-sigma factor until released by regulated intramembrane proteolysis. Over-expression of SigL induces 19-28 genes including polyketide synthases, secreted and membrane proteins. Might play a minor role in regulating SigB.</text>
</comment>
<comment type="subunit">
    <text evidence="3 4 5 6">Interacts transiently with the RNA polymerase catalytic core formed by RpoA, RpoB, RpoC and RpoZ (2 alpha, 1 beta, 1 beta' and 1 omega subunit) to form the RNA polymerase holoenzyme that can initiate transcription. Interacts (via sigma-70 factor domain-4) with anti-sigma-L factor RslA.</text>
</comment>
<comment type="induction">
    <text evidence="3 4">Expressed during growth in culture; expression increases from lag to exponential phase. Has a weak SigL-independent promoter, is also weakly autoregulated, no other sigma factor allows its transcription. Forms an operon with rslA.</text>
</comment>
<comment type="domain">
    <text evidence="1">The sigma-70 factor domain-2 mediates sequence-specific interaction with the -10 element in promoter DNA, and plays an important role in melting the double-stranded DNA and the formation of the transcription bubble. The sigma-70 factor domain-2 mediates interaction with the RNA polymerase subunits RpoB and RpoC (By similarity).</text>
</comment>
<comment type="domain">
    <text evidence="7">The sigma-70 factor domain-4 contains a helix-turn-helix (H-T-H) motif that mediates interaction with the -35 element in promoter DNA. The domain also mediates interaction with the RNA polymerase subunit RpoA. Interactions between sigma-70 factor domain-4 and anti-sigma factors prevents interaction of sigma factors with the RNA polymerase catalytic core (Probable).</text>
</comment>
<comment type="disruption phenotype">
    <text evidence="3 4">In a single sigL (PubMed:16199577) or double sigL-rslA (PubMed:16552079) disruption mutant, no visible phenotype; not more susceptible than the parental strain to several oxidative and nitrosative stresses. Infected BALB/c or DBA/2 mice showed a significantly prolonged survival time relative to mice infected with wild-type bacteria, although bacteria proliferate normally.</text>
</comment>
<comment type="miscellaneous">
    <text evidence="7">Extracytoplasmic function (ECF) sigma factors are held in an inactive form by an anti-sigma factor until released by regulated intramembrane proteolysis (RIP). RIP occurs when an extracytoplasmic signal triggers a concerted proteolytic cascade to transmit information and elicit cellular responses. The membrane-spanning anti-sigma factor is first cut extracytoplasmically (site-1 protease, S1P), then within the membrane itself (site-2 protease, S2P, Rip1), while cytoplasmic proteases finish degrading the regulatory protein, liberating SigL (Probable).</text>
</comment>
<comment type="similarity">
    <text evidence="7">Belongs to the sigma-70 factor family. ECF subfamily.</text>
</comment>
<dbReference type="EMBL" id="AL123456">
    <property type="protein sequence ID" value="CCP43480.1"/>
    <property type="molecule type" value="Genomic_DNA"/>
</dbReference>
<dbReference type="RefSeq" id="NP_215249.1">
    <property type="nucleotide sequence ID" value="NC_000962.3"/>
</dbReference>
<dbReference type="RefSeq" id="WP_003403731.1">
    <property type="nucleotide sequence ID" value="NZ_NVQJ01000007.1"/>
</dbReference>
<dbReference type="PDB" id="3HUG">
    <property type="method" value="X-ray"/>
    <property type="resolution" value="2.35 A"/>
    <property type="chains" value="A/C/E/G/I/K/M/O/Q/S=99-177"/>
</dbReference>
<dbReference type="PDB" id="6DV9">
    <property type="method" value="X-ray"/>
    <property type="resolution" value="3.80 A"/>
    <property type="chains" value="F=1-177"/>
</dbReference>
<dbReference type="PDB" id="6DVB">
    <property type="method" value="X-ray"/>
    <property type="resolution" value="3.80 A"/>
    <property type="chains" value="F=1-177"/>
</dbReference>
<dbReference type="PDB" id="6DVC">
    <property type="method" value="X-ray"/>
    <property type="resolution" value="3.30 A"/>
    <property type="chains" value="F=1-177"/>
</dbReference>
<dbReference type="PDB" id="6DVD">
    <property type="method" value="X-ray"/>
    <property type="resolution" value="3.90 A"/>
    <property type="chains" value="F=1-177"/>
</dbReference>
<dbReference type="PDB" id="6DVE">
    <property type="method" value="X-ray"/>
    <property type="resolution" value="3.81 A"/>
    <property type="chains" value="F=1-177"/>
</dbReference>
<dbReference type="PDB" id="6TYE">
    <property type="method" value="X-ray"/>
    <property type="resolution" value="3.79 A"/>
    <property type="chains" value="F=1-177"/>
</dbReference>
<dbReference type="PDB" id="6TYF">
    <property type="method" value="X-ray"/>
    <property type="resolution" value="3.80 A"/>
    <property type="chains" value="F=1-177"/>
</dbReference>
<dbReference type="PDB" id="6TYG">
    <property type="method" value="X-ray"/>
    <property type="resolution" value="3.50 A"/>
    <property type="chains" value="F=1-177"/>
</dbReference>
<dbReference type="PDB" id="7RWI">
    <property type="method" value="X-ray"/>
    <property type="resolution" value="3.70 A"/>
    <property type="chains" value="F=1-177"/>
</dbReference>
<dbReference type="PDBsum" id="3HUG"/>
<dbReference type="PDBsum" id="6DV9"/>
<dbReference type="PDBsum" id="6DVB"/>
<dbReference type="PDBsum" id="6DVC"/>
<dbReference type="PDBsum" id="6DVD"/>
<dbReference type="PDBsum" id="6DVE"/>
<dbReference type="PDBsum" id="6TYE"/>
<dbReference type="PDBsum" id="6TYF"/>
<dbReference type="PDBsum" id="6TYG"/>
<dbReference type="PDBsum" id="7RWI"/>
<dbReference type="SMR" id="P9WGH5"/>
<dbReference type="STRING" id="83332.Rv0735"/>
<dbReference type="PaxDb" id="83332-Rv0735"/>
<dbReference type="DNASU" id="888609"/>
<dbReference type="GeneID" id="45424700"/>
<dbReference type="GeneID" id="888609"/>
<dbReference type="KEGG" id="mtu:Rv0735"/>
<dbReference type="KEGG" id="mtv:RVBD_0735"/>
<dbReference type="TubercuList" id="Rv0735"/>
<dbReference type="eggNOG" id="COG1595">
    <property type="taxonomic scope" value="Bacteria"/>
</dbReference>
<dbReference type="InParanoid" id="P9WGH5"/>
<dbReference type="OrthoDB" id="9811152at2"/>
<dbReference type="PhylomeDB" id="P9WGH5"/>
<dbReference type="EvolutionaryTrace" id="P9WGH5"/>
<dbReference type="Proteomes" id="UP000001584">
    <property type="component" value="Chromosome"/>
</dbReference>
<dbReference type="GO" id="GO:0003677">
    <property type="term" value="F:DNA binding"/>
    <property type="evidence" value="ECO:0007669"/>
    <property type="project" value="UniProtKB-KW"/>
</dbReference>
<dbReference type="GO" id="GO:0016987">
    <property type="term" value="F:sigma factor activity"/>
    <property type="evidence" value="ECO:0000314"/>
    <property type="project" value="MTBBASE"/>
</dbReference>
<dbReference type="GO" id="GO:0006352">
    <property type="term" value="P:DNA-templated transcription initiation"/>
    <property type="evidence" value="ECO:0007669"/>
    <property type="project" value="InterPro"/>
</dbReference>
<dbReference type="GO" id="GO:0006355">
    <property type="term" value="P:regulation of DNA-templated transcription"/>
    <property type="evidence" value="ECO:0000314"/>
    <property type="project" value="MTBBASE"/>
</dbReference>
<dbReference type="CDD" id="cd06171">
    <property type="entry name" value="Sigma70_r4"/>
    <property type="match status" value="1"/>
</dbReference>
<dbReference type="FunFam" id="1.10.10.10:FF:000669">
    <property type="entry name" value="RNA polymerase sigma factor"/>
    <property type="match status" value="1"/>
</dbReference>
<dbReference type="Gene3D" id="1.10.1740.10">
    <property type="match status" value="1"/>
</dbReference>
<dbReference type="Gene3D" id="1.10.10.10">
    <property type="entry name" value="Winged helix-like DNA-binding domain superfamily/Winged helix DNA-binding domain"/>
    <property type="match status" value="1"/>
</dbReference>
<dbReference type="InterPro" id="IPR039425">
    <property type="entry name" value="RNA_pol_sigma-70-like"/>
</dbReference>
<dbReference type="InterPro" id="IPR014284">
    <property type="entry name" value="RNA_pol_sigma-70_dom"/>
</dbReference>
<dbReference type="InterPro" id="IPR000838">
    <property type="entry name" value="RNA_pol_sigma70_ECF_CS"/>
</dbReference>
<dbReference type="InterPro" id="IPR007627">
    <property type="entry name" value="RNA_pol_sigma70_r2"/>
</dbReference>
<dbReference type="InterPro" id="IPR007630">
    <property type="entry name" value="RNA_pol_sigma70_r4"/>
</dbReference>
<dbReference type="InterPro" id="IPR013325">
    <property type="entry name" value="RNA_pol_sigma_r2"/>
</dbReference>
<dbReference type="InterPro" id="IPR013324">
    <property type="entry name" value="RNA_pol_sigma_r3/r4-like"/>
</dbReference>
<dbReference type="InterPro" id="IPR036388">
    <property type="entry name" value="WH-like_DNA-bd_sf"/>
</dbReference>
<dbReference type="NCBIfam" id="NF007227">
    <property type="entry name" value="PRK09645.1"/>
    <property type="match status" value="1"/>
</dbReference>
<dbReference type="NCBIfam" id="TIGR02937">
    <property type="entry name" value="sigma70-ECF"/>
    <property type="match status" value="1"/>
</dbReference>
<dbReference type="PANTHER" id="PTHR43133:SF52">
    <property type="entry name" value="ECF RNA POLYMERASE SIGMA FACTOR SIGL"/>
    <property type="match status" value="1"/>
</dbReference>
<dbReference type="PANTHER" id="PTHR43133">
    <property type="entry name" value="RNA POLYMERASE ECF-TYPE SIGMA FACTO"/>
    <property type="match status" value="1"/>
</dbReference>
<dbReference type="Pfam" id="PF04542">
    <property type="entry name" value="Sigma70_r2"/>
    <property type="match status" value="1"/>
</dbReference>
<dbReference type="Pfam" id="PF04545">
    <property type="entry name" value="Sigma70_r4"/>
    <property type="match status" value="1"/>
</dbReference>
<dbReference type="SUPFAM" id="SSF88946">
    <property type="entry name" value="Sigma2 domain of RNA polymerase sigma factors"/>
    <property type="match status" value="1"/>
</dbReference>
<dbReference type="SUPFAM" id="SSF88659">
    <property type="entry name" value="Sigma3 and sigma4 domains of RNA polymerase sigma factors"/>
    <property type="match status" value="1"/>
</dbReference>
<dbReference type="PROSITE" id="PS01063">
    <property type="entry name" value="SIGMA70_ECF"/>
    <property type="match status" value="1"/>
</dbReference>
<evidence type="ECO:0000250" key="1"/>
<evidence type="ECO:0000255" key="2"/>
<evidence type="ECO:0000269" key="3">
    <source>
    </source>
</evidence>
<evidence type="ECO:0000269" key="4">
    <source>
    </source>
</evidence>
<evidence type="ECO:0000269" key="5">
    <source>
    </source>
</evidence>
<evidence type="ECO:0000269" key="6">
    <source>
    </source>
</evidence>
<evidence type="ECO:0000305" key="7"/>
<evidence type="ECO:0007829" key="8">
    <source>
        <dbReference type="PDB" id="3HUG"/>
    </source>
</evidence>
<evidence type="ECO:0007829" key="9">
    <source>
        <dbReference type="PDB" id="6DVC"/>
    </source>
</evidence>
<accession>P9WGH5</accession>
<accession>F2GMW0</accession>
<accession>Q7ARS1</accession>
<accession>Q7D9D4</accession>
<protein>
    <recommendedName>
        <fullName>ECF RNA polymerase sigma factor SigL</fullName>
        <shortName>ECF sigma factor SigL</shortName>
    </recommendedName>
    <alternativeName>
        <fullName>Alternative RNA polymerase sigma factor SigL</fullName>
    </alternativeName>
    <alternativeName>
        <fullName>RNA polymerase sigma-L factor</fullName>
        <shortName>Sigma-L factor</shortName>
    </alternativeName>
</protein>
<organism>
    <name type="scientific">Mycobacterium tuberculosis (strain ATCC 25618 / H37Rv)</name>
    <dbReference type="NCBI Taxonomy" id="83332"/>
    <lineage>
        <taxon>Bacteria</taxon>
        <taxon>Bacillati</taxon>
        <taxon>Actinomycetota</taxon>
        <taxon>Actinomycetes</taxon>
        <taxon>Mycobacteriales</taxon>
        <taxon>Mycobacteriaceae</taxon>
        <taxon>Mycobacterium</taxon>
        <taxon>Mycobacterium tuberculosis complex</taxon>
    </lineage>
</organism>